<name>EX7S_BACMK</name>
<gene>
    <name evidence="1" type="primary">xseB</name>
    <name type="ordered locus">BcerKBAB4_4031</name>
</gene>
<reference key="1">
    <citation type="journal article" date="2008" name="Chem. Biol. Interact.">
        <title>Extending the Bacillus cereus group genomics to putative food-borne pathogens of different toxicity.</title>
        <authorList>
            <person name="Lapidus A."/>
            <person name="Goltsman E."/>
            <person name="Auger S."/>
            <person name="Galleron N."/>
            <person name="Segurens B."/>
            <person name="Dossat C."/>
            <person name="Land M.L."/>
            <person name="Broussolle V."/>
            <person name="Brillard J."/>
            <person name="Guinebretiere M.-H."/>
            <person name="Sanchis V."/>
            <person name="Nguen-the C."/>
            <person name="Lereclus D."/>
            <person name="Richardson P."/>
            <person name="Wincker P."/>
            <person name="Weissenbach J."/>
            <person name="Ehrlich S.D."/>
            <person name="Sorokin A."/>
        </authorList>
    </citation>
    <scope>NUCLEOTIDE SEQUENCE [LARGE SCALE GENOMIC DNA]</scope>
    <source>
        <strain>KBAB4</strain>
    </source>
</reference>
<keyword id="KW-0963">Cytoplasm</keyword>
<keyword id="KW-0269">Exonuclease</keyword>
<keyword id="KW-0378">Hydrolase</keyword>
<keyword id="KW-0540">Nuclease</keyword>
<comment type="function">
    <text evidence="1">Bidirectionally degrades single-stranded DNA into large acid-insoluble oligonucleotides, which are then degraded further into small acid-soluble oligonucleotides.</text>
</comment>
<comment type="catalytic activity">
    <reaction evidence="1">
        <text>Exonucleolytic cleavage in either 5'- to 3'- or 3'- to 5'-direction to yield nucleoside 5'-phosphates.</text>
        <dbReference type="EC" id="3.1.11.6"/>
    </reaction>
</comment>
<comment type="subunit">
    <text evidence="1">Heterooligomer composed of large and small subunits.</text>
</comment>
<comment type="subcellular location">
    <subcellularLocation>
        <location evidence="1">Cytoplasm</location>
    </subcellularLocation>
</comment>
<comment type="similarity">
    <text evidence="1">Belongs to the XseB family.</text>
</comment>
<organism>
    <name type="scientific">Bacillus mycoides (strain KBAB4)</name>
    <name type="common">Bacillus weihenstephanensis</name>
    <dbReference type="NCBI Taxonomy" id="315730"/>
    <lineage>
        <taxon>Bacteria</taxon>
        <taxon>Bacillati</taxon>
        <taxon>Bacillota</taxon>
        <taxon>Bacilli</taxon>
        <taxon>Bacillales</taxon>
        <taxon>Bacillaceae</taxon>
        <taxon>Bacillus</taxon>
        <taxon>Bacillus cereus group</taxon>
    </lineage>
</organism>
<dbReference type="EC" id="3.1.11.6" evidence="1"/>
<dbReference type="EMBL" id="CP000903">
    <property type="protein sequence ID" value="ABY45193.1"/>
    <property type="molecule type" value="Genomic_DNA"/>
</dbReference>
<dbReference type="RefSeq" id="WP_000428422.1">
    <property type="nucleotide sequence ID" value="NZ_CAKMRX030000166.1"/>
</dbReference>
<dbReference type="SMR" id="A9VGD3"/>
<dbReference type="GeneID" id="92885240"/>
<dbReference type="KEGG" id="bwe:BcerKBAB4_4031"/>
<dbReference type="eggNOG" id="COG1722">
    <property type="taxonomic scope" value="Bacteria"/>
</dbReference>
<dbReference type="HOGENOM" id="CLU_145918_3_1_9"/>
<dbReference type="Proteomes" id="UP000002154">
    <property type="component" value="Chromosome"/>
</dbReference>
<dbReference type="GO" id="GO:0005829">
    <property type="term" value="C:cytosol"/>
    <property type="evidence" value="ECO:0007669"/>
    <property type="project" value="TreeGrafter"/>
</dbReference>
<dbReference type="GO" id="GO:0009318">
    <property type="term" value="C:exodeoxyribonuclease VII complex"/>
    <property type="evidence" value="ECO:0007669"/>
    <property type="project" value="InterPro"/>
</dbReference>
<dbReference type="GO" id="GO:0008855">
    <property type="term" value="F:exodeoxyribonuclease VII activity"/>
    <property type="evidence" value="ECO:0007669"/>
    <property type="project" value="UniProtKB-UniRule"/>
</dbReference>
<dbReference type="GO" id="GO:0006308">
    <property type="term" value="P:DNA catabolic process"/>
    <property type="evidence" value="ECO:0007669"/>
    <property type="project" value="UniProtKB-UniRule"/>
</dbReference>
<dbReference type="FunFam" id="1.10.287.1040:FF:000002">
    <property type="entry name" value="Exodeoxyribonuclease 7 small subunit"/>
    <property type="match status" value="1"/>
</dbReference>
<dbReference type="Gene3D" id="1.10.287.1040">
    <property type="entry name" value="Exonuclease VII, small subunit"/>
    <property type="match status" value="1"/>
</dbReference>
<dbReference type="HAMAP" id="MF_00337">
    <property type="entry name" value="Exonuc_7_S"/>
    <property type="match status" value="1"/>
</dbReference>
<dbReference type="InterPro" id="IPR003761">
    <property type="entry name" value="Exonuc_VII_S"/>
</dbReference>
<dbReference type="InterPro" id="IPR037004">
    <property type="entry name" value="Exonuc_VII_ssu_sf"/>
</dbReference>
<dbReference type="NCBIfam" id="NF010666">
    <property type="entry name" value="PRK14063.1"/>
    <property type="match status" value="1"/>
</dbReference>
<dbReference type="NCBIfam" id="TIGR01280">
    <property type="entry name" value="xseB"/>
    <property type="match status" value="1"/>
</dbReference>
<dbReference type="PANTHER" id="PTHR34137">
    <property type="entry name" value="EXODEOXYRIBONUCLEASE 7 SMALL SUBUNIT"/>
    <property type="match status" value="1"/>
</dbReference>
<dbReference type="PANTHER" id="PTHR34137:SF1">
    <property type="entry name" value="EXODEOXYRIBONUCLEASE 7 SMALL SUBUNIT"/>
    <property type="match status" value="1"/>
</dbReference>
<dbReference type="Pfam" id="PF02609">
    <property type="entry name" value="Exonuc_VII_S"/>
    <property type="match status" value="1"/>
</dbReference>
<dbReference type="PIRSF" id="PIRSF006488">
    <property type="entry name" value="Exonuc_VII_S"/>
    <property type="match status" value="1"/>
</dbReference>
<dbReference type="SUPFAM" id="SSF116842">
    <property type="entry name" value="XseB-like"/>
    <property type="match status" value="1"/>
</dbReference>
<proteinExistence type="inferred from homology"/>
<sequence>MENKLSFEEAISQLEHLVSKLEQGDVPLEEAISYFKEGMELSKLCDEKLKDVQEQMAVILGEDGELKPFTALGDEA</sequence>
<accession>A9VGD3</accession>
<protein>
    <recommendedName>
        <fullName evidence="1">Exodeoxyribonuclease 7 small subunit</fullName>
        <ecNumber evidence="1">3.1.11.6</ecNumber>
    </recommendedName>
    <alternativeName>
        <fullName evidence="1">Exodeoxyribonuclease VII small subunit</fullName>
        <shortName evidence="1">Exonuclease VII small subunit</shortName>
    </alternativeName>
</protein>
<feature type="chain" id="PRO_1000119901" description="Exodeoxyribonuclease 7 small subunit">
    <location>
        <begin position="1"/>
        <end position="76"/>
    </location>
</feature>
<evidence type="ECO:0000255" key="1">
    <source>
        <dbReference type="HAMAP-Rule" id="MF_00337"/>
    </source>
</evidence>